<proteinExistence type="evidence at transcript level"/>
<sequence length="512" mass="58155">MLFRISMSATEFLLASLIFCLVFWVIRASRPRVPKGLKNPPGPWGWPLIGHILTLGKNPHLALSRMSQRYGDVLQIRIGSTPVLVLSGLDTIRQALVQQGDDFKGRPNLYSFTLISNGQSMSFGPDSGPVWAARRRLAQNGLKSFSIASDPASSSSCYLEEHVSKEAEVLISKLQEQMAGPGHFNPYRYVVISVANVICAICFGQRYDHNHQELLSLVNLSNNFGEVVGSGNPADFIPILRYLPNRSLNGFKDLNEKFHSFMQKMIKEHYKTFEKGYIRDITDSLIEHCQEKQLDENANIQLSDEKIVNVVLDLFGAGFDTVTTAISWSLMYLVTNPRVQRKIQEELDTVIGRSRRPRLSDRSHLPYMEAFILETFRHSSFVPFTIPHSTTRDTSLKGFYIPKGRCVFVNQWQINHDQKLWVNPSEFLPERFITPDGAIDKVLSEKVILFGLGKRKCIGETIARWEVFLFLAILLQRVEFSVPPGVKVDMTPIYGLTMKHACCEHFQMQLRS</sequence>
<comment type="function">
    <text evidence="3">A cytochrome P450 monooxygenase involved in the metabolism of various endogenous substrates, including fatty acids, steroid hormones and vitamins. Mechanistically, uses molecular oxygen inserting one oxygen atom into a substrate, and reducing the second into a water molecule, with two electrons provided by NADPH via cytochrome P450 reductase (CPR; NADPH-ferrihemoprotein reductase). Catalyzes the hydroxylation of carbon-hydrogen bonds. Exhibits high catalytic activity for the formation of hydroxyestrogens from estrone (E1) and 17beta-estradiol (E2), namely 2-hydroxy E1 and E2, as well as D-ring hydroxylated E1 and E2 at the C15alpha and C16alpha positions. Displays different regioselectivities for polyunsaturated fatty acids (PUFA) hydroxylation. Catalyzes the epoxidation of double bonds of certain PUFA. Converts arachidonic acid toward epoxyeicosatrienoic acid (EET) regioisomers, 8,9-, 11,12-, and 14,15-EET, that function as lipid mediators in the vascular system. Displays an absolute stereoselectivity in the epoxidation of eicosapentaenoic acid (EPA) producing the 17(R),18(S) enantiomer. May play an important role in all-trans retinoic acid biosynthesis in extrahepatic tissues. Catalyzes two successive oxidative transformation of all-trans retinol to all-trans retinal and then to the active form all-trans retinoic acid. May also participate in eicosanoids metabolism by converting hydroperoxide species into oxo metabolites (lipoxygenase-like reaction, NADPH-independent).</text>
</comment>
<comment type="catalytic activity">
    <reaction evidence="3">
        <text>an organic molecule + reduced [NADPH--hemoprotein reductase] + O2 = an alcohol + oxidized [NADPH--hemoprotein reductase] + H2O + H(+)</text>
        <dbReference type="Rhea" id="RHEA:17149"/>
        <dbReference type="Rhea" id="RHEA-COMP:11964"/>
        <dbReference type="Rhea" id="RHEA-COMP:11965"/>
        <dbReference type="ChEBI" id="CHEBI:15377"/>
        <dbReference type="ChEBI" id="CHEBI:15378"/>
        <dbReference type="ChEBI" id="CHEBI:15379"/>
        <dbReference type="ChEBI" id="CHEBI:30879"/>
        <dbReference type="ChEBI" id="CHEBI:57618"/>
        <dbReference type="ChEBI" id="CHEBI:58210"/>
        <dbReference type="ChEBI" id="CHEBI:142491"/>
        <dbReference type="EC" id="1.14.14.1"/>
    </reaction>
    <physiologicalReaction direction="right-to-left" evidence="3">
        <dbReference type="Rhea" id="RHEA:17151"/>
    </physiologicalReaction>
</comment>
<comment type="catalytic activity">
    <reaction evidence="3">
        <text>estrone + reduced [NADPH--hemoprotein reductase] + O2 = 2-hydroxyestrone + oxidized [NADPH--hemoprotein reductase] + H2O + H(+)</text>
        <dbReference type="Rhea" id="RHEA:47208"/>
        <dbReference type="Rhea" id="RHEA-COMP:11964"/>
        <dbReference type="Rhea" id="RHEA-COMP:11965"/>
        <dbReference type="ChEBI" id="CHEBI:1156"/>
        <dbReference type="ChEBI" id="CHEBI:15377"/>
        <dbReference type="ChEBI" id="CHEBI:15378"/>
        <dbReference type="ChEBI" id="CHEBI:15379"/>
        <dbReference type="ChEBI" id="CHEBI:17263"/>
        <dbReference type="ChEBI" id="CHEBI:57618"/>
        <dbReference type="ChEBI" id="CHEBI:58210"/>
    </reaction>
    <physiologicalReaction direction="left-to-right" evidence="3">
        <dbReference type="Rhea" id="RHEA:47209"/>
    </physiologicalReaction>
</comment>
<comment type="catalytic activity">
    <reaction evidence="3">
        <text>estrone + reduced [NADPH--hemoprotein reductase] + O2 = 4-hydroxyestrone + oxidized [NADPH--hemoprotein reductase] + H2O + H(+)</text>
        <dbReference type="Rhea" id="RHEA:47292"/>
        <dbReference type="Rhea" id="RHEA-COMP:11964"/>
        <dbReference type="Rhea" id="RHEA-COMP:11965"/>
        <dbReference type="ChEBI" id="CHEBI:15377"/>
        <dbReference type="ChEBI" id="CHEBI:15378"/>
        <dbReference type="ChEBI" id="CHEBI:15379"/>
        <dbReference type="ChEBI" id="CHEBI:17263"/>
        <dbReference type="ChEBI" id="CHEBI:57618"/>
        <dbReference type="ChEBI" id="CHEBI:58210"/>
        <dbReference type="ChEBI" id="CHEBI:87602"/>
    </reaction>
    <physiologicalReaction direction="left-to-right" evidence="3">
        <dbReference type="Rhea" id="RHEA:47293"/>
    </physiologicalReaction>
</comment>
<comment type="catalytic activity">
    <reaction evidence="3">
        <text>estrone + reduced [NADPH--hemoprotein reductase] + O2 = 6alpha-hydroxyestrone + oxidized [NADPH--hemoprotein reductase] + H2O + H(+)</text>
        <dbReference type="Rhea" id="RHEA:47308"/>
        <dbReference type="Rhea" id="RHEA-COMP:11964"/>
        <dbReference type="Rhea" id="RHEA-COMP:11965"/>
        <dbReference type="ChEBI" id="CHEBI:15377"/>
        <dbReference type="ChEBI" id="CHEBI:15378"/>
        <dbReference type="ChEBI" id="CHEBI:15379"/>
        <dbReference type="ChEBI" id="CHEBI:17263"/>
        <dbReference type="ChEBI" id="CHEBI:57618"/>
        <dbReference type="ChEBI" id="CHEBI:58210"/>
        <dbReference type="ChEBI" id="CHEBI:87605"/>
    </reaction>
    <physiologicalReaction direction="left-to-right" evidence="3">
        <dbReference type="Rhea" id="RHEA:47309"/>
    </physiologicalReaction>
</comment>
<comment type="catalytic activity">
    <reaction evidence="3">
        <text>estrone + reduced [NADPH--hemoprotein reductase] + O2 = 15alpha-hydroxyestrone + oxidized [NADPH--hemoprotein reductase] + H2O + H(+)</text>
        <dbReference type="Rhea" id="RHEA:47312"/>
        <dbReference type="Rhea" id="RHEA-COMP:11964"/>
        <dbReference type="Rhea" id="RHEA-COMP:11965"/>
        <dbReference type="ChEBI" id="CHEBI:15377"/>
        <dbReference type="ChEBI" id="CHEBI:15378"/>
        <dbReference type="ChEBI" id="CHEBI:15379"/>
        <dbReference type="ChEBI" id="CHEBI:17263"/>
        <dbReference type="ChEBI" id="CHEBI:57618"/>
        <dbReference type="ChEBI" id="CHEBI:58210"/>
        <dbReference type="ChEBI" id="CHEBI:87618"/>
    </reaction>
    <physiologicalReaction direction="left-to-right" evidence="3">
        <dbReference type="Rhea" id="RHEA:47313"/>
    </physiologicalReaction>
</comment>
<comment type="catalytic activity">
    <reaction evidence="3">
        <text>estrone + reduced [NADPH--hemoprotein reductase] + O2 = 16alpha-hydroxyestrone + oxidized [NADPH--hemoprotein reductase] + H2O + H(+)</text>
        <dbReference type="Rhea" id="RHEA:47204"/>
        <dbReference type="Rhea" id="RHEA-COMP:11964"/>
        <dbReference type="Rhea" id="RHEA-COMP:11965"/>
        <dbReference type="ChEBI" id="CHEBI:776"/>
        <dbReference type="ChEBI" id="CHEBI:15377"/>
        <dbReference type="ChEBI" id="CHEBI:15378"/>
        <dbReference type="ChEBI" id="CHEBI:15379"/>
        <dbReference type="ChEBI" id="CHEBI:17263"/>
        <dbReference type="ChEBI" id="CHEBI:57618"/>
        <dbReference type="ChEBI" id="CHEBI:58210"/>
    </reaction>
    <physiologicalReaction direction="left-to-right" evidence="3">
        <dbReference type="Rhea" id="RHEA:47205"/>
    </physiologicalReaction>
</comment>
<comment type="catalytic activity">
    <reaction evidence="3">
        <text>17beta-estradiol + reduced [NADPH--hemoprotein reductase] + O2 = 2-hydroxy-17beta-estradiol + oxidized [NADPH--hemoprotein reductase] + H2O + H(+)</text>
        <dbReference type="Rhea" id="RHEA:47212"/>
        <dbReference type="Rhea" id="RHEA-COMP:11964"/>
        <dbReference type="Rhea" id="RHEA-COMP:11965"/>
        <dbReference type="ChEBI" id="CHEBI:15377"/>
        <dbReference type="ChEBI" id="CHEBI:15378"/>
        <dbReference type="ChEBI" id="CHEBI:15379"/>
        <dbReference type="ChEBI" id="CHEBI:16469"/>
        <dbReference type="ChEBI" id="CHEBI:28744"/>
        <dbReference type="ChEBI" id="CHEBI:57618"/>
        <dbReference type="ChEBI" id="CHEBI:58210"/>
    </reaction>
    <physiologicalReaction direction="left-to-right" evidence="3">
        <dbReference type="Rhea" id="RHEA:47213"/>
    </physiologicalReaction>
</comment>
<comment type="catalytic activity">
    <reaction evidence="3">
        <text>17beta-estradiol + reduced [NADPH--hemoprotein reductase] + O2 = 4-hydroxy-17beta-estradiol + oxidized [NADPH--hemoprotein reductase] + H2O + H(+)</text>
        <dbReference type="Rhea" id="RHEA:47280"/>
        <dbReference type="Rhea" id="RHEA-COMP:11964"/>
        <dbReference type="Rhea" id="RHEA-COMP:11965"/>
        <dbReference type="ChEBI" id="CHEBI:15377"/>
        <dbReference type="ChEBI" id="CHEBI:15378"/>
        <dbReference type="ChEBI" id="CHEBI:15379"/>
        <dbReference type="ChEBI" id="CHEBI:16469"/>
        <dbReference type="ChEBI" id="CHEBI:57618"/>
        <dbReference type="ChEBI" id="CHEBI:58210"/>
        <dbReference type="ChEBI" id="CHEBI:62845"/>
    </reaction>
    <physiologicalReaction direction="left-to-right" evidence="3">
        <dbReference type="Rhea" id="RHEA:47281"/>
    </physiologicalReaction>
</comment>
<comment type="catalytic activity">
    <reaction evidence="3">
        <text>17beta-estradiol + reduced [NADPH--hemoprotein reductase] + O2 = 6alpha-hydroxy-17beta-estradiol + oxidized [NADPH--hemoprotein reductase] + H2O + H(+)</text>
        <dbReference type="Rhea" id="RHEA:47284"/>
        <dbReference type="Rhea" id="RHEA-COMP:11964"/>
        <dbReference type="Rhea" id="RHEA-COMP:11965"/>
        <dbReference type="ChEBI" id="CHEBI:15377"/>
        <dbReference type="ChEBI" id="CHEBI:15378"/>
        <dbReference type="ChEBI" id="CHEBI:15379"/>
        <dbReference type="ChEBI" id="CHEBI:16469"/>
        <dbReference type="ChEBI" id="CHEBI:57618"/>
        <dbReference type="ChEBI" id="CHEBI:58210"/>
        <dbReference type="ChEBI" id="CHEBI:62847"/>
    </reaction>
    <physiologicalReaction direction="left-to-right" evidence="3">
        <dbReference type="Rhea" id="RHEA:47285"/>
    </physiologicalReaction>
</comment>
<comment type="catalytic activity">
    <reaction evidence="3">
        <text>17beta-estradiol + reduced [NADPH--hemoprotein reductase] + O2 = 7alpha-hydroxy-17beta-estradiol + oxidized [NADPH--hemoprotein reductase] + H2O + H(+)</text>
        <dbReference type="Rhea" id="RHEA:47288"/>
        <dbReference type="Rhea" id="RHEA-COMP:11964"/>
        <dbReference type="Rhea" id="RHEA-COMP:11965"/>
        <dbReference type="ChEBI" id="CHEBI:15377"/>
        <dbReference type="ChEBI" id="CHEBI:15378"/>
        <dbReference type="ChEBI" id="CHEBI:15379"/>
        <dbReference type="ChEBI" id="CHEBI:16469"/>
        <dbReference type="ChEBI" id="CHEBI:57618"/>
        <dbReference type="ChEBI" id="CHEBI:58210"/>
        <dbReference type="ChEBI" id="CHEBI:87598"/>
    </reaction>
    <physiologicalReaction direction="left-to-right" evidence="3">
        <dbReference type="Rhea" id="RHEA:47289"/>
    </physiologicalReaction>
</comment>
<comment type="catalytic activity">
    <reaction evidence="3">
        <text>17beta-estradiol + reduced [NADPH--hemoprotein reductase] + O2 = 15alpha-hydroxy-17beta-estradiol + oxidized [NADPH--hemoprotein reductase] + H2O + H(+)</text>
        <dbReference type="Rhea" id="RHEA:47276"/>
        <dbReference type="Rhea" id="RHEA-COMP:11964"/>
        <dbReference type="Rhea" id="RHEA-COMP:11965"/>
        <dbReference type="ChEBI" id="CHEBI:15377"/>
        <dbReference type="ChEBI" id="CHEBI:15378"/>
        <dbReference type="ChEBI" id="CHEBI:15379"/>
        <dbReference type="ChEBI" id="CHEBI:16469"/>
        <dbReference type="ChEBI" id="CHEBI:57618"/>
        <dbReference type="ChEBI" id="CHEBI:58210"/>
        <dbReference type="ChEBI" id="CHEBI:87593"/>
    </reaction>
    <physiologicalReaction direction="left-to-right" evidence="3">
        <dbReference type="Rhea" id="RHEA:47277"/>
    </physiologicalReaction>
</comment>
<comment type="catalytic activity">
    <reaction evidence="3">
        <text>(5Z,8Z,11Z)-eicosatrienoate + reduced [NADPH--hemoprotein reductase] + O2 = 19-hydroxy-(5Z,8Z,11Z)-eicosatrienoate + oxidized [NADPH--hemoprotein reductase] + H2O + H(+)</text>
        <dbReference type="Rhea" id="RHEA:50076"/>
        <dbReference type="Rhea" id="RHEA-COMP:11964"/>
        <dbReference type="Rhea" id="RHEA-COMP:11965"/>
        <dbReference type="ChEBI" id="CHEBI:15377"/>
        <dbReference type="ChEBI" id="CHEBI:15378"/>
        <dbReference type="ChEBI" id="CHEBI:15379"/>
        <dbReference type="ChEBI" id="CHEBI:57618"/>
        <dbReference type="ChEBI" id="CHEBI:58210"/>
        <dbReference type="ChEBI" id="CHEBI:78043"/>
        <dbReference type="ChEBI" id="CHEBI:132024"/>
    </reaction>
    <physiologicalReaction direction="left-to-right" evidence="3">
        <dbReference type="Rhea" id="RHEA:50077"/>
    </physiologicalReaction>
</comment>
<comment type="catalytic activity">
    <reaction evidence="3">
        <text>(5Z,8Z,11Z,14Z)-eicosatetraenoate + reduced [NADPH--hemoprotein reductase] + O2 = 16-hydroxy-(5Z,8Z,11Z,14Z)-eicosatetraenoate + oxidized [NADPH--hemoprotein reductase] + H2O + H(+)</text>
        <dbReference type="Rhea" id="RHEA:49972"/>
        <dbReference type="Rhea" id="RHEA-COMP:11964"/>
        <dbReference type="Rhea" id="RHEA-COMP:11965"/>
        <dbReference type="ChEBI" id="CHEBI:15377"/>
        <dbReference type="ChEBI" id="CHEBI:15378"/>
        <dbReference type="ChEBI" id="CHEBI:15379"/>
        <dbReference type="ChEBI" id="CHEBI:32395"/>
        <dbReference type="ChEBI" id="CHEBI:57618"/>
        <dbReference type="ChEBI" id="CHEBI:58210"/>
        <dbReference type="ChEBI" id="CHEBI:132019"/>
    </reaction>
    <physiologicalReaction direction="left-to-right" evidence="3">
        <dbReference type="Rhea" id="RHEA:49973"/>
    </physiologicalReaction>
</comment>
<comment type="catalytic activity">
    <reaction evidence="3">
        <text>(5Z,8Z,11Z,14Z)-eicosatetraenoate + reduced [NADPH--hemoprotein reductase] + O2 = 17-hydroxy-(5Z,8Z,11Z,14Z)-eicosatetraenoate + oxidized [NADPH--hemoprotein reductase] + H2O + H(+)</text>
        <dbReference type="Rhea" id="RHEA:49968"/>
        <dbReference type="Rhea" id="RHEA-COMP:11964"/>
        <dbReference type="Rhea" id="RHEA-COMP:11965"/>
        <dbReference type="ChEBI" id="CHEBI:15377"/>
        <dbReference type="ChEBI" id="CHEBI:15378"/>
        <dbReference type="ChEBI" id="CHEBI:15379"/>
        <dbReference type="ChEBI" id="CHEBI:32395"/>
        <dbReference type="ChEBI" id="CHEBI:57618"/>
        <dbReference type="ChEBI" id="CHEBI:58210"/>
        <dbReference type="ChEBI" id="CHEBI:132016"/>
    </reaction>
    <physiologicalReaction direction="left-to-right" evidence="3">
        <dbReference type="Rhea" id="RHEA:49969"/>
    </physiologicalReaction>
</comment>
<comment type="catalytic activity">
    <reaction evidence="3">
        <text>(5Z,8Z,11Z,14Z)-eicosatetraenoate + reduced [NADPH--hemoprotein reductase] + O2 = 18-hydroxy-(5Z,8Z,11Z,14Z)-eicosatetraenoate + oxidized [NADPH--hemoprotein reductase] + H2O + H(+)</text>
        <dbReference type="Rhea" id="RHEA:39811"/>
        <dbReference type="Rhea" id="RHEA-COMP:11964"/>
        <dbReference type="Rhea" id="RHEA-COMP:11965"/>
        <dbReference type="ChEBI" id="CHEBI:15377"/>
        <dbReference type="ChEBI" id="CHEBI:15378"/>
        <dbReference type="ChEBI" id="CHEBI:15379"/>
        <dbReference type="ChEBI" id="CHEBI:32395"/>
        <dbReference type="ChEBI" id="CHEBI:57618"/>
        <dbReference type="ChEBI" id="CHEBI:58210"/>
        <dbReference type="ChEBI" id="CHEBI:63590"/>
    </reaction>
    <physiologicalReaction direction="left-to-right" evidence="3">
        <dbReference type="Rhea" id="RHEA:39812"/>
    </physiologicalReaction>
</comment>
<comment type="catalytic activity">
    <reaction evidence="3">
        <text>(5Z,8Z,11Z,14Z)-eicosatetraenoate + reduced [NADPH--hemoprotein reductase] + O2 = 19-hydroxy-(5Z,8Z,11Z,14Z)-eicosatetraenoate + oxidized [NADPH--hemoprotein reductase] + H2O + H(+)</text>
        <dbReference type="Rhea" id="RHEA:39759"/>
        <dbReference type="Rhea" id="RHEA-COMP:11964"/>
        <dbReference type="Rhea" id="RHEA-COMP:11965"/>
        <dbReference type="ChEBI" id="CHEBI:15377"/>
        <dbReference type="ChEBI" id="CHEBI:15378"/>
        <dbReference type="ChEBI" id="CHEBI:15379"/>
        <dbReference type="ChEBI" id="CHEBI:32395"/>
        <dbReference type="ChEBI" id="CHEBI:57618"/>
        <dbReference type="ChEBI" id="CHEBI:58210"/>
        <dbReference type="ChEBI" id="CHEBI:76627"/>
    </reaction>
    <physiologicalReaction direction="left-to-right" evidence="3">
        <dbReference type="Rhea" id="RHEA:39760"/>
    </physiologicalReaction>
</comment>
<comment type="catalytic activity">
    <reaction evidence="3">
        <text>(5Z,8Z,11Z,14Z,17Z)-eicosapentaenoate + reduced [NADPH--hemoprotein reductase] + O2 = 19-hydroxy-(5Z,8Z,11Z,14Z,17Z)-eicosapentaenoate + oxidized [NADPH--hemoprotein reductase] + H2O + H(+)</text>
        <dbReference type="Rhea" id="RHEA:39787"/>
        <dbReference type="Rhea" id="RHEA-COMP:11964"/>
        <dbReference type="Rhea" id="RHEA-COMP:11965"/>
        <dbReference type="ChEBI" id="CHEBI:15377"/>
        <dbReference type="ChEBI" id="CHEBI:15378"/>
        <dbReference type="ChEBI" id="CHEBI:15379"/>
        <dbReference type="ChEBI" id="CHEBI:57618"/>
        <dbReference type="ChEBI" id="CHEBI:58210"/>
        <dbReference type="ChEBI" id="CHEBI:58562"/>
        <dbReference type="ChEBI" id="CHEBI:76636"/>
    </reaction>
    <physiologicalReaction direction="left-to-right" evidence="3">
        <dbReference type="Rhea" id="RHEA:39788"/>
    </physiologicalReaction>
</comment>
<comment type="catalytic activity">
    <reaction evidence="3">
        <text>(5Z,8Z,11Z,14Z)-eicosatetraenoate + reduced [NADPH--hemoprotein reductase] + O2 = (8R,9S)-epoxy-(5Z,11Z,14Z)-eicosatrienoate + oxidized [NADPH--hemoprotein reductase] + H2O + H(+)</text>
        <dbReference type="Rhea" id="RHEA:49884"/>
        <dbReference type="Rhea" id="RHEA-COMP:11964"/>
        <dbReference type="Rhea" id="RHEA-COMP:11965"/>
        <dbReference type="ChEBI" id="CHEBI:15377"/>
        <dbReference type="ChEBI" id="CHEBI:15378"/>
        <dbReference type="ChEBI" id="CHEBI:15379"/>
        <dbReference type="ChEBI" id="CHEBI:32395"/>
        <dbReference type="ChEBI" id="CHEBI:57618"/>
        <dbReference type="ChEBI" id="CHEBI:58210"/>
        <dbReference type="ChEBI" id="CHEBI:131975"/>
    </reaction>
    <physiologicalReaction direction="left-to-right" evidence="3">
        <dbReference type="Rhea" id="RHEA:49885"/>
    </physiologicalReaction>
</comment>
<comment type="catalytic activity">
    <reaction evidence="3">
        <text>(5Z,8Z,11Z,14Z)-eicosatetraenoate + reduced [NADPH--hemoprotein reductase] + O2 = (11R,12S)-epoxy-(5Z,8Z,14Z)-eicosatrienoate + oxidized [NADPH--hemoprotein reductase] + H2O + H(+)</text>
        <dbReference type="Rhea" id="RHEA:49880"/>
        <dbReference type="Rhea" id="RHEA-COMP:11964"/>
        <dbReference type="Rhea" id="RHEA-COMP:11965"/>
        <dbReference type="ChEBI" id="CHEBI:15377"/>
        <dbReference type="ChEBI" id="CHEBI:15378"/>
        <dbReference type="ChEBI" id="CHEBI:15379"/>
        <dbReference type="ChEBI" id="CHEBI:32395"/>
        <dbReference type="ChEBI" id="CHEBI:57618"/>
        <dbReference type="ChEBI" id="CHEBI:58210"/>
        <dbReference type="ChEBI" id="CHEBI:131970"/>
    </reaction>
    <physiologicalReaction direction="left-to-right" evidence="3">
        <dbReference type="Rhea" id="RHEA:49881"/>
    </physiologicalReaction>
</comment>
<comment type="catalytic activity">
    <reaction evidence="3">
        <text>(5Z,8Z,11Z,14Z)-eicosatetraenoate + reduced [NADPH--hemoprotein reductase] + O2 = (14S,15R)-epoxy-(5Z,8Z,11Z)-eicosatrienoate + oxidized [NADPH--hemoprotein reductase] + H2O + H(+)</text>
        <dbReference type="Rhea" id="RHEA:49856"/>
        <dbReference type="Rhea" id="RHEA-COMP:11964"/>
        <dbReference type="Rhea" id="RHEA-COMP:11965"/>
        <dbReference type="ChEBI" id="CHEBI:15377"/>
        <dbReference type="ChEBI" id="CHEBI:15378"/>
        <dbReference type="ChEBI" id="CHEBI:15379"/>
        <dbReference type="ChEBI" id="CHEBI:32395"/>
        <dbReference type="ChEBI" id="CHEBI:57618"/>
        <dbReference type="ChEBI" id="CHEBI:58210"/>
        <dbReference type="ChEBI" id="CHEBI:131964"/>
    </reaction>
    <physiologicalReaction direction="left-to-right" evidence="3">
        <dbReference type="Rhea" id="RHEA:49857"/>
    </physiologicalReaction>
</comment>
<comment type="catalytic activity">
    <reaction evidence="3">
        <text>(5Z,8Z,11Z,14Z)-eicosatetraenoate + reduced [NADPH--hemoprotein reductase] + O2 = (14R,15S)-epoxy-(5Z,8Z,11Z)-eicosatrienoate + oxidized [NADPH--hemoprotein reductase] + H2O + H(+)</text>
        <dbReference type="Rhea" id="RHEA:49860"/>
        <dbReference type="Rhea" id="RHEA-COMP:11964"/>
        <dbReference type="Rhea" id="RHEA-COMP:11965"/>
        <dbReference type="ChEBI" id="CHEBI:15377"/>
        <dbReference type="ChEBI" id="CHEBI:15378"/>
        <dbReference type="ChEBI" id="CHEBI:15379"/>
        <dbReference type="ChEBI" id="CHEBI:32395"/>
        <dbReference type="ChEBI" id="CHEBI:57618"/>
        <dbReference type="ChEBI" id="CHEBI:58210"/>
        <dbReference type="ChEBI" id="CHEBI:131965"/>
    </reaction>
    <physiologicalReaction direction="left-to-right" evidence="3">
        <dbReference type="Rhea" id="RHEA:49861"/>
    </physiologicalReaction>
</comment>
<comment type="catalytic activity">
    <reaction evidence="3">
        <text>(5Z,8Z,11Z,14Z,17Z)-eicosapentaenoate + reduced [NADPH--hemoprotein reductase] + O2 = (17R,18S)-epoxy-(5Z,8Z,11Z,14Z)-eicosatetraenoate + oxidized [NADPH--hemoprotein reductase] + H2O + H(+)</text>
        <dbReference type="Rhea" id="RHEA:39779"/>
        <dbReference type="Rhea" id="RHEA-COMP:11964"/>
        <dbReference type="Rhea" id="RHEA-COMP:11965"/>
        <dbReference type="ChEBI" id="CHEBI:15377"/>
        <dbReference type="ChEBI" id="CHEBI:15378"/>
        <dbReference type="ChEBI" id="CHEBI:15379"/>
        <dbReference type="ChEBI" id="CHEBI:57618"/>
        <dbReference type="ChEBI" id="CHEBI:58210"/>
        <dbReference type="ChEBI" id="CHEBI:58562"/>
        <dbReference type="ChEBI" id="CHEBI:76634"/>
    </reaction>
    <physiologicalReaction direction="left-to-right" evidence="3">
        <dbReference type="Rhea" id="RHEA:39780"/>
    </physiologicalReaction>
</comment>
<comment type="catalytic activity">
    <reaction evidence="3">
        <text>(4Z,7Z,10Z,13Z,16Z,19Z)-docosahexaenoate + reduced [NADPH--hemoprotein reductase] + O2 = (19S,20R)-epoxy-(4Z,7Z,10Z,13Z,16Z)-docosapentaenoate + oxidized [NADPH--hemoprotein reductase] + H2O + H(+)</text>
        <dbReference type="Rhea" id="RHEA:52124"/>
        <dbReference type="Rhea" id="RHEA-COMP:11964"/>
        <dbReference type="Rhea" id="RHEA-COMP:11965"/>
        <dbReference type="ChEBI" id="CHEBI:15377"/>
        <dbReference type="ChEBI" id="CHEBI:15378"/>
        <dbReference type="ChEBI" id="CHEBI:15379"/>
        <dbReference type="ChEBI" id="CHEBI:57618"/>
        <dbReference type="ChEBI" id="CHEBI:58210"/>
        <dbReference type="ChEBI" id="CHEBI:77016"/>
        <dbReference type="ChEBI" id="CHEBI:136411"/>
    </reaction>
    <physiologicalReaction direction="left-to-right" evidence="3">
        <dbReference type="Rhea" id="RHEA:52125"/>
    </physiologicalReaction>
</comment>
<comment type="catalytic activity">
    <reaction evidence="3">
        <text>(4Z,7Z,10Z,13Z,16Z,19Z)-docosahexaenoate + reduced [NADPH--hemoprotein reductase] + O2 = (19R,20S)-epoxy-(4Z,7Z,10Z,13Z,16Z)-docosapentaenoate + oxidized [NADPH--hemoprotein reductase] + H2O + H(+)</text>
        <dbReference type="Rhea" id="RHEA:52120"/>
        <dbReference type="Rhea" id="RHEA-COMP:11964"/>
        <dbReference type="Rhea" id="RHEA-COMP:11965"/>
        <dbReference type="ChEBI" id="CHEBI:15377"/>
        <dbReference type="ChEBI" id="CHEBI:15378"/>
        <dbReference type="ChEBI" id="CHEBI:15379"/>
        <dbReference type="ChEBI" id="CHEBI:57618"/>
        <dbReference type="ChEBI" id="CHEBI:58210"/>
        <dbReference type="ChEBI" id="CHEBI:77016"/>
        <dbReference type="ChEBI" id="CHEBI:136410"/>
    </reaction>
    <physiologicalReaction direction="left-to-right" evidence="3">
        <dbReference type="Rhea" id="RHEA:52121"/>
    </physiologicalReaction>
</comment>
<comment type="catalytic activity">
    <reaction evidence="3">
        <text>all-trans-retinol + reduced [NADPH--hemoprotein reductase] + O2 = all-trans-retinal + oxidized [NADPH--hemoprotein reductase] + 2 H2O + H(+)</text>
        <dbReference type="Rhea" id="RHEA:42092"/>
        <dbReference type="Rhea" id="RHEA-COMP:11964"/>
        <dbReference type="Rhea" id="RHEA-COMP:11965"/>
        <dbReference type="ChEBI" id="CHEBI:15377"/>
        <dbReference type="ChEBI" id="CHEBI:15378"/>
        <dbReference type="ChEBI" id="CHEBI:15379"/>
        <dbReference type="ChEBI" id="CHEBI:17336"/>
        <dbReference type="ChEBI" id="CHEBI:17898"/>
        <dbReference type="ChEBI" id="CHEBI:57618"/>
        <dbReference type="ChEBI" id="CHEBI:58210"/>
    </reaction>
    <physiologicalReaction direction="left-to-right" evidence="3">
        <dbReference type="Rhea" id="RHEA:42093"/>
    </physiologicalReaction>
</comment>
<comment type="catalytic activity">
    <reaction evidence="3">
        <text>all-trans-retinal + reduced [NADPH--hemoprotein reductase] + O2 = all-trans-retinoate + oxidized [NADPH--hemoprotein reductase] + H2O + 2 H(+)</text>
        <dbReference type="Rhea" id="RHEA:42088"/>
        <dbReference type="Rhea" id="RHEA-COMP:11964"/>
        <dbReference type="Rhea" id="RHEA-COMP:11965"/>
        <dbReference type="ChEBI" id="CHEBI:15377"/>
        <dbReference type="ChEBI" id="CHEBI:15378"/>
        <dbReference type="ChEBI" id="CHEBI:15379"/>
        <dbReference type="ChEBI" id="CHEBI:17898"/>
        <dbReference type="ChEBI" id="CHEBI:35291"/>
        <dbReference type="ChEBI" id="CHEBI:57618"/>
        <dbReference type="ChEBI" id="CHEBI:58210"/>
    </reaction>
    <physiologicalReaction direction="left-to-right" evidence="3">
        <dbReference type="Rhea" id="RHEA:42089"/>
    </physiologicalReaction>
</comment>
<comment type="catalytic activity">
    <reaction evidence="3">
        <text>(13S)-hydroperoxy-(9Z,11E)-octadecadienoate = 13-oxo-(9Z,11E)-octadecadienoate + H2O</text>
        <dbReference type="Rhea" id="RHEA:48716"/>
        <dbReference type="ChEBI" id="CHEBI:15377"/>
        <dbReference type="ChEBI" id="CHEBI:57466"/>
        <dbReference type="ChEBI" id="CHEBI:90781"/>
    </reaction>
    <physiologicalReaction direction="left-to-right" evidence="3">
        <dbReference type="Rhea" id="RHEA:48717"/>
    </physiologicalReaction>
</comment>
<comment type="catalytic activity">
    <reaction evidence="3">
        <text>(12S)-hydroperoxy-(5Z,8Z,10E,14Z)-eicosatetraenoate = 12-oxo-(5Z,8Z,10E,14Z)-eicosatetraenoate + H2O</text>
        <dbReference type="Rhea" id="RHEA:37947"/>
        <dbReference type="ChEBI" id="CHEBI:15377"/>
        <dbReference type="ChEBI" id="CHEBI:57444"/>
        <dbReference type="ChEBI" id="CHEBI:75231"/>
        <dbReference type="EC" id="4.2.1.152"/>
    </reaction>
    <physiologicalReaction direction="left-to-right" evidence="3">
        <dbReference type="Rhea" id="RHEA:37948"/>
    </physiologicalReaction>
</comment>
<comment type="catalytic activity">
    <reaction evidence="3">
        <text>(15S)-hydroperoxy-(5Z,8Z,11Z,13E)-eicosatetraenoate = 15-oxo-(5Z,8Z,11Z,13E)-eicosatetraenoate + H2O</text>
        <dbReference type="Rhea" id="RHEA:48636"/>
        <dbReference type="ChEBI" id="CHEBI:15377"/>
        <dbReference type="ChEBI" id="CHEBI:57410"/>
        <dbReference type="ChEBI" id="CHEBI:57446"/>
    </reaction>
    <physiologicalReaction direction="left-to-right" evidence="3">
        <dbReference type="Rhea" id="RHEA:48637"/>
    </physiologicalReaction>
</comment>
<comment type="catalytic activity">
    <reaction evidence="3">
        <text>(5S)-hydroperoxy-(6E,8Z,11Z,14Z)-eicosatetraenoate = 5-oxo-(6E,8Z,11Z,14Z)-eicosatetraenoate + H2O</text>
        <dbReference type="Rhea" id="RHEA:48632"/>
        <dbReference type="ChEBI" id="CHEBI:15377"/>
        <dbReference type="ChEBI" id="CHEBI:57450"/>
        <dbReference type="ChEBI" id="CHEBI:65342"/>
    </reaction>
    <physiologicalReaction direction="left-to-right" evidence="3">
        <dbReference type="Rhea" id="RHEA:48633"/>
    </physiologicalReaction>
</comment>
<comment type="cofactor">
    <cofactor evidence="1">
        <name>heme</name>
        <dbReference type="ChEBI" id="CHEBI:30413"/>
    </cofactor>
</comment>
<comment type="pathway">
    <text evidence="3">Steroid hormone biosynthesis.</text>
</comment>
<comment type="pathway">
    <text evidence="3">Lipid metabolism; fatty acid metabolism.</text>
</comment>
<comment type="pathway">
    <text evidence="3">Cofactor metabolism; retinol metabolism.</text>
</comment>
<comment type="subunit">
    <text evidence="2">Interacts with cytosolic chaperones HSP70 and HSP90; this interaction is required for initial targeting to mitochondria. Interacts (via mitochondrial targeting signal) with TOMM40 (via N-terminus); this interaction is required for translocation across the mitochondrial outer membrane.</text>
</comment>
<comment type="subcellular location">
    <subcellularLocation>
        <location evidence="2">Endoplasmic reticulum membrane</location>
        <topology evidence="2">Peripheral membrane protein</topology>
    </subcellularLocation>
    <subcellularLocation>
        <location evidence="2">Mitochondrion inner membrane</location>
        <topology evidence="2">Peripheral membrane protein</topology>
    </subcellularLocation>
    <subcellularLocation>
        <location evidence="2">Microsome membrane</location>
        <topology evidence="2">Peripheral membrane protein</topology>
    </subcellularLocation>
    <subcellularLocation>
        <location evidence="2">Cytoplasm</location>
    </subcellularLocation>
</comment>
<comment type="similarity">
    <text evidence="4">Belongs to the cytochrome P450 family.</text>
</comment>
<reference key="1">
    <citation type="journal article" date="1992" name="Biochim. Biophys. Acta">
        <title>Molecular cloning of monkey P450 1A1 cDNA and expression in yeast.</title>
        <authorList>
            <person name="Komori M."/>
            <person name="Kikuchi O."/>
            <person name="Kitada M."/>
            <person name="Kamataki T."/>
        </authorList>
    </citation>
    <scope>NUCLEOTIDE SEQUENCE [MRNA]</scope>
</reference>
<reference key="2">
    <citation type="submission" date="1993-11" db="EMBL/GenBank/DDBJ databases">
        <title>Molecular cloning and sequence analysis of cDNA encoding a crab-eating monkey (Macaca irus) cytochrome P-450.</title>
        <authorList>
            <person name="Ohmachi T."/>
            <person name="Sagami I."/>
            <person name="Kikuchi H."/>
            <person name="Fujii H."/>
            <person name="Suzaki Y."/>
            <person name="Fujiwara T."/>
            <person name="Watanabe M."/>
        </authorList>
    </citation>
    <scope>NUCLEOTIDE SEQUENCE [MRNA]</scope>
    <source>
        <tissue>Liver</tissue>
    </source>
</reference>
<accession>P33616</accession>
<accession>Q29489</accession>
<gene>
    <name type="primary">CYP1A1</name>
</gene>
<feature type="chain" id="PRO_0000051628" description="Cytochrome P450 1A1">
    <location>
        <begin position="1"/>
        <end position="512"/>
    </location>
</feature>
<feature type="region of interest" description="Mitochondrial targeting signal" evidence="2">
    <location>
        <begin position="29"/>
        <end position="40"/>
    </location>
</feature>
<feature type="binding site" evidence="1">
    <location>
        <position position="224"/>
    </location>
    <ligand>
        <name>substrate</name>
    </ligand>
</feature>
<feature type="binding site" description="axial binding residue" evidence="1">
    <location>
        <position position="457"/>
    </location>
    <ligand>
        <name>heme</name>
        <dbReference type="ChEBI" id="CHEBI:30413"/>
    </ligand>
    <ligandPart>
        <name>Fe</name>
        <dbReference type="ChEBI" id="CHEBI:18248"/>
    </ligandPart>
</feature>
<feature type="glycosylation site" description="O-linked (GlcNAc) serine" evidence="1">
    <location>
        <position position="67"/>
    </location>
</feature>
<feature type="sequence conflict" description="In Ref. 2; BAA04500." evidence="4" ref="2">
    <original>Y</original>
    <variation>H</variation>
    <location>
        <position position="277"/>
    </location>
</feature>
<feature type="sequence conflict" description="In Ref. 2; BAA04500." evidence="4" ref="2">
    <original>M</original>
    <variation>V</variation>
    <location>
        <position position="490"/>
    </location>
</feature>
<name>CP1A1_MACFA</name>
<organism>
    <name type="scientific">Macaca fascicularis</name>
    <name type="common">Crab-eating macaque</name>
    <name type="synonym">Cynomolgus monkey</name>
    <dbReference type="NCBI Taxonomy" id="9541"/>
    <lineage>
        <taxon>Eukaryota</taxon>
        <taxon>Metazoa</taxon>
        <taxon>Chordata</taxon>
        <taxon>Craniata</taxon>
        <taxon>Vertebrata</taxon>
        <taxon>Euteleostomi</taxon>
        <taxon>Mammalia</taxon>
        <taxon>Eutheria</taxon>
        <taxon>Euarchontoglires</taxon>
        <taxon>Primates</taxon>
        <taxon>Haplorrhini</taxon>
        <taxon>Catarrhini</taxon>
        <taxon>Cercopithecidae</taxon>
        <taxon>Cercopithecinae</taxon>
        <taxon>Macaca</taxon>
    </lineage>
</organism>
<evidence type="ECO:0000250" key="1"/>
<evidence type="ECO:0000250" key="2">
    <source>
        <dbReference type="UniProtKB" id="P00185"/>
    </source>
</evidence>
<evidence type="ECO:0000250" key="3">
    <source>
        <dbReference type="UniProtKB" id="P04798"/>
    </source>
</evidence>
<evidence type="ECO:0000305" key="4"/>
<dbReference type="EC" id="1.14.14.1" evidence="3"/>
<dbReference type="EC" id="4.2.1.152" evidence="3"/>
<dbReference type="EMBL" id="D17575">
    <property type="protein sequence ID" value="BAA04500.1"/>
    <property type="molecule type" value="mRNA"/>
</dbReference>
<dbReference type="PIR" id="S21761">
    <property type="entry name" value="S21761"/>
</dbReference>
<dbReference type="RefSeq" id="NP_001306411.1">
    <property type="nucleotide sequence ID" value="NM_001319482.1"/>
</dbReference>
<dbReference type="SMR" id="P33616"/>
<dbReference type="STRING" id="9541.ENSMFAP00000021776"/>
<dbReference type="GlyCosmos" id="P33616">
    <property type="glycosylation" value="1 site, No reported glycans"/>
</dbReference>
<dbReference type="eggNOG" id="KOG0156">
    <property type="taxonomic scope" value="Eukaryota"/>
</dbReference>
<dbReference type="UniPathway" id="UPA00199"/>
<dbReference type="UniPathway" id="UPA00912"/>
<dbReference type="Proteomes" id="UP000233100">
    <property type="component" value="Unplaced"/>
</dbReference>
<dbReference type="GO" id="GO:0005789">
    <property type="term" value="C:endoplasmic reticulum membrane"/>
    <property type="evidence" value="ECO:0007669"/>
    <property type="project" value="UniProtKB-SubCell"/>
</dbReference>
<dbReference type="GO" id="GO:0005743">
    <property type="term" value="C:mitochondrial inner membrane"/>
    <property type="evidence" value="ECO:0000250"/>
    <property type="project" value="UniProtKB"/>
</dbReference>
<dbReference type="GO" id="GO:0101020">
    <property type="term" value="F:estrogen 16-alpha-hydroxylase activity"/>
    <property type="evidence" value="ECO:0000250"/>
    <property type="project" value="UniProtKB"/>
</dbReference>
<dbReference type="GO" id="GO:0101021">
    <property type="term" value="F:estrogen 2-hydroxylase activity"/>
    <property type="evidence" value="ECO:0000250"/>
    <property type="project" value="UniProtKB"/>
</dbReference>
<dbReference type="GO" id="GO:0020037">
    <property type="term" value="F:heme binding"/>
    <property type="evidence" value="ECO:0007669"/>
    <property type="project" value="InterPro"/>
</dbReference>
<dbReference type="GO" id="GO:0030544">
    <property type="term" value="F:Hsp70 protein binding"/>
    <property type="evidence" value="ECO:0000250"/>
    <property type="project" value="UniProtKB"/>
</dbReference>
<dbReference type="GO" id="GO:0051879">
    <property type="term" value="F:Hsp90 protein binding"/>
    <property type="evidence" value="ECO:0000250"/>
    <property type="project" value="UniProtKB"/>
</dbReference>
<dbReference type="GO" id="GO:0106256">
    <property type="term" value="F:hydroperoxy icosatetraenoate dehydratase activity"/>
    <property type="evidence" value="ECO:0007669"/>
    <property type="project" value="UniProtKB-EC"/>
</dbReference>
<dbReference type="GO" id="GO:0005506">
    <property type="term" value="F:iron ion binding"/>
    <property type="evidence" value="ECO:0007669"/>
    <property type="project" value="InterPro"/>
</dbReference>
<dbReference type="GO" id="GO:0004508">
    <property type="term" value="F:steroid 17-alpha-monooxygenase activity"/>
    <property type="evidence" value="ECO:0007669"/>
    <property type="project" value="TreeGrafter"/>
</dbReference>
<dbReference type="GO" id="GO:0008210">
    <property type="term" value="P:estrogen metabolic process"/>
    <property type="evidence" value="ECO:0000250"/>
    <property type="project" value="UniProtKB"/>
</dbReference>
<dbReference type="GO" id="GO:0006631">
    <property type="term" value="P:fatty acid metabolic process"/>
    <property type="evidence" value="ECO:0007669"/>
    <property type="project" value="UniProtKB-UniPathway"/>
</dbReference>
<dbReference type="GO" id="GO:0042446">
    <property type="term" value="P:hormone biosynthetic process"/>
    <property type="evidence" value="ECO:0007669"/>
    <property type="project" value="TreeGrafter"/>
</dbReference>
<dbReference type="GO" id="GO:0042448">
    <property type="term" value="P:progesterone metabolic process"/>
    <property type="evidence" value="ECO:0007669"/>
    <property type="project" value="TreeGrafter"/>
</dbReference>
<dbReference type="GO" id="GO:0042572">
    <property type="term" value="P:retinol metabolic process"/>
    <property type="evidence" value="ECO:0000250"/>
    <property type="project" value="UniProtKB"/>
</dbReference>
<dbReference type="GO" id="GO:0006694">
    <property type="term" value="P:steroid biosynthetic process"/>
    <property type="evidence" value="ECO:0007669"/>
    <property type="project" value="UniProtKB-KW"/>
</dbReference>
<dbReference type="CDD" id="cd20676">
    <property type="entry name" value="CYP1A"/>
    <property type="match status" value="1"/>
</dbReference>
<dbReference type="FunFam" id="1.10.630.10:FF:000002">
    <property type="entry name" value="Cytochrome P450 1A1"/>
    <property type="match status" value="1"/>
</dbReference>
<dbReference type="Gene3D" id="1.10.630.10">
    <property type="entry name" value="Cytochrome P450"/>
    <property type="match status" value="1"/>
</dbReference>
<dbReference type="InterPro" id="IPR001128">
    <property type="entry name" value="Cyt_P450"/>
</dbReference>
<dbReference type="InterPro" id="IPR017972">
    <property type="entry name" value="Cyt_P450_CS"/>
</dbReference>
<dbReference type="InterPro" id="IPR002401">
    <property type="entry name" value="Cyt_P450_E_grp-I"/>
</dbReference>
<dbReference type="InterPro" id="IPR008066">
    <property type="entry name" value="Cyt_P450_E_grp-I_CYP1"/>
</dbReference>
<dbReference type="InterPro" id="IPR036396">
    <property type="entry name" value="Cyt_P450_sf"/>
</dbReference>
<dbReference type="PANTHER" id="PTHR24289:SF21">
    <property type="entry name" value="CYTOCHROME P450 1A"/>
    <property type="match status" value="1"/>
</dbReference>
<dbReference type="PANTHER" id="PTHR24289">
    <property type="entry name" value="STEROID 17-ALPHA-HYDROXYLASE/17,20 LYASE"/>
    <property type="match status" value="1"/>
</dbReference>
<dbReference type="Pfam" id="PF00067">
    <property type="entry name" value="p450"/>
    <property type="match status" value="1"/>
</dbReference>
<dbReference type="PRINTS" id="PR00463">
    <property type="entry name" value="EP450I"/>
</dbReference>
<dbReference type="PRINTS" id="PR01683">
    <property type="entry name" value="EP450ICYP1A"/>
</dbReference>
<dbReference type="PRINTS" id="PR00385">
    <property type="entry name" value="P450"/>
</dbReference>
<dbReference type="SUPFAM" id="SSF48264">
    <property type="entry name" value="Cytochrome P450"/>
    <property type="match status" value="1"/>
</dbReference>
<dbReference type="PROSITE" id="PS00086">
    <property type="entry name" value="CYTOCHROME_P450"/>
    <property type="match status" value="1"/>
</dbReference>
<protein>
    <recommendedName>
        <fullName>Cytochrome P450 1A1</fullName>
        <ecNumber evidence="3">1.14.14.1</ecNumber>
    </recommendedName>
    <alternativeName>
        <fullName>CYPIA1</fullName>
    </alternativeName>
    <alternativeName>
        <fullName>Cytochrome P450 form 6</fullName>
    </alternativeName>
    <alternativeName>
        <fullName>Cytochrome P450-C</fullName>
    </alternativeName>
    <alternativeName>
        <fullName>Cytochrome P450-P1</fullName>
    </alternativeName>
    <alternativeName>
        <fullName>Hydroperoxy icosatetraenoate dehydratase</fullName>
        <ecNumber evidence="3">4.2.1.152</ecNumber>
    </alternativeName>
</protein>
<keyword id="KW-0963">Cytoplasm</keyword>
<keyword id="KW-0256">Endoplasmic reticulum</keyword>
<keyword id="KW-0325">Glycoprotein</keyword>
<keyword id="KW-0349">Heme</keyword>
<keyword id="KW-0408">Iron</keyword>
<keyword id="KW-0444">Lipid biosynthesis</keyword>
<keyword id="KW-0443">Lipid metabolism</keyword>
<keyword id="KW-0456">Lyase</keyword>
<keyword id="KW-0472">Membrane</keyword>
<keyword id="KW-0479">Metal-binding</keyword>
<keyword id="KW-0492">Microsome</keyword>
<keyword id="KW-0496">Mitochondrion</keyword>
<keyword id="KW-0999">Mitochondrion inner membrane</keyword>
<keyword id="KW-0503">Monooxygenase</keyword>
<keyword id="KW-0560">Oxidoreductase</keyword>
<keyword id="KW-1185">Reference proteome</keyword>
<keyword id="KW-0752">Steroid biosynthesis</keyword>